<protein>
    <recommendedName>
        <fullName evidence="1">Ferredoxin--NADP reductase</fullName>
        <shortName evidence="1">FNR</shortName>
        <shortName evidence="1">Fd-NADP(+) reductase</shortName>
        <ecNumber evidence="1">1.18.1.2</ecNumber>
    </recommendedName>
</protein>
<organism>
    <name type="scientific">Limosilactobacillus reuteri subsp. reuteri (strain JCM 1112)</name>
    <name type="common">Lactobacillus reuteri</name>
    <dbReference type="NCBI Taxonomy" id="557433"/>
    <lineage>
        <taxon>Bacteria</taxon>
        <taxon>Bacillati</taxon>
        <taxon>Bacillota</taxon>
        <taxon>Bacilli</taxon>
        <taxon>Lactobacillales</taxon>
        <taxon>Lactobacillaceae</taxon>
        <taxon>Limosilactobacillus</taxon>
    </lineage>
</organism>
<name>FENR_LIMRJ</name>
<proteinExistence type="inferred from homology"/>
<reference key="1">
    <citation type="journal article" date="2008" name="DNA Res.">
        <title>Comparative genome analysis of Lactobacillus reuteri and Lactobacillus fermentum reveal a genomic island for reuterin and cobalamin production.</title>
        <authorList>
            <person name="Morita H."/>
            <person name="Toh H."/>
            <person name="Fukuda S."/>
            <person name="Horikawa H."/>
            <person name="Oshima K."/>
            <person name="Suzuki T."/>
            <person name="Murakami M."/>
            <person name="Hisamatsu S."/>
            <person name="Kato Y."/>
            <person name="Takizawa T."/>
            <person name="Fukuoka H."/>
            <person name="Yoshimura T."/>
            <person name="Itoh K."/>
            <person name="O'Sullivan D.J."/>
            <person name="McKay L.L."/>
            <person name="Ohno H."/>
            <person name="Kikuchi J."/>
            <person name="Masaoka T."/>
            <person name="Hattori M."/>
        </authorList>
    </citation>
    <scope>NUCLEOTIDE SEQUENCE [LARGE SCALE GENOMIC DNA]</scope>
    <source>
        <strain>JCM 1112</strain>
    </source>
</reference>
<gene>
    <name type="ordered locus">LAR_1546</name>
</gene>
<feature type="chain" id="PRO_0000364859" description="Ferredoxin--NADP reductase">
    <location>
        <begin position="1"/>
        <end position="332"/>
    </location>
</feature>
<feature type="binding site" evidence="1">
    <location>
        <position position="35"/>
    </location>
    <ligand>
        <name>FAD</name>
        <dbReference type="ChEBI" id="CHEBI:57692"/>
    </ligand>
</feature>
<feature type="binding site" evidence="1">
    <location>
        <position position="43"/>
    </location>
    <ligand>
        <name>FAD</name>
        <dbReference type="ChEBI" id="CHEBI:57692"/>
    </ligand>
</feature>
<feature type="binding site" evidence="1">
    <location>
        <position position="48"/>
    </location>
    <ligand>
        <name>FAD</name>
        <dbReference type="ChEBI" id="CHEBI:57692"/>
    </ligand>
</feature>
<feature type="binding site" evidence="1">
    <location>
        <position position="88"/>
    </location>
    <ligand>
        <name>FAD</name>
        <dbReference type="ChEBI" id="CHEBI:57692"/>
    </ligand>
</feature>
<feature type="binding site" evidence="1">
    <location>
        <position position="122"/>
    </location>
    <ligand>
        <name>FAD</name>
        <dbReference type="ChEBI" id="CHEBI:57692"/>
    </ligand>
</feature>
<feature type="binding site" evidence="1">
    <location>
        <position position="286"/>
    </location>
    <ligand>
        <name>FAD</name>
        <dbReference type="ChEBI" id="CHEBI:57692"/>
    </ligand>
</feature>
<feature type="binding site" evidence="1">
    <location>
        <position position="326"/>
    </location>
    <ligand>
        <name>FAD</name>
        <dbReference type="ChEBI" id="CHEBI:57692"/>
    </ligand>
</feature>
<dbReference type="EC" id="1.18.1.2" evidence="1"/>
<dbReference type="EMBL" id="AP007281">
    <property type="protein sequence ID" value="BAG26062.1"/>
    <property type="molecule type" value="Genomic_DNA"/>
</dbReference>
<dbReference type="RefSeq" id="WP_003669058.1">
    <property type="nucleotide sequence ID" value="NC_010609.1"/>
</dbReference>
<dbReference type="SMR" id="B2G9D0"/>
<dbReference type="KEGG" id="lrf:LAR_1546"/>
<dbReference type="HOGENOM" id="CLU_031864_5_5_9"/>
<dbReference type="GO" id="GO:0004324">
    <property type="term" value="F:ferredoxin-NADP+ reductase activity"/>
    <property type="evidence" value="ECO:0007669"/>
    <property type="project" value="UniProtKB-UniRule"/>
</dbReference>
<dbReference type="GO" id="GO:0050660">
    <property type="term" value="F:flavin adenine dinucleotide binding"/>
    <property type="evidence" value="ECO:0007669"/>
    <property type="project" value="UniProtKB-UniRule"/>
</dbReference>
<dbReference type="GO" id="GO:0050661">
    <property type="term" value="F:NADP binding"/>
    <property type="evidence" value="ECO:0007669"/>
    <property type="project" value="UniProtKB-UniRule"/>
</dbReference>
<dbReference type="Gene3D" id="3.50.50.60">
    <property type="entry name" value="FAD/NAD(P)-binding domain"/>
    <property type="match status" value="2"/>
</dbReference>
<dbReference type="HAMAP" id="MF_01685">
    <property type="entry name" value="FENR2"/>
    <property type="match status" value="1"/>
</dbReference>
<dbReference type="InterPro" id="IPR036188">
    <property type="entry name" value="FAD/NAD-bd_sf"/>
</dbReference>
<dbReference type="InterPro" id="IPR023753">
    <property type="entry name" value="FAD/NAD-binding_dom"/>
</dbReference>
<dbReference type="InterPro" id="IPR022890">
    <property type="entry name" value="Fd--NADP_Rdtase_type_2"/>
</dbReference>
<dbReference type="InterPro" id="IPR050097">
    <property type="entry name" value="Ferredoxin-NADP_redctase_2"/>
</dbReference>
<dbReference type="PANTHER" id="PTHR48105">
    <property type="entry name" value="THIOREDOXIN REDUCTASE 1-RELATED-RELATED"/>
    <property type="match status" value="1"/>
</dbReference>
<dbReference type="Pfam" id="PF07992">
    <property type="entry name" value="Pyr_redox_2"/>
    <property type="match status" value="1"/>
</dbReference>
<dbReference type="PRINTS" id="PR00368">
    <property type="entry name" value="FADPNR"/>
</dbReference>
<dbReference type="PRINTS" id="PR00469">
    <property type="entry name" value="PNDRDTASEII"/>
</dbReference>
<dbReference type="SUPFAM" id="SSF51905">
    <property type="entry name" value="FAD/NAD(P)-binding domain"/>
    <property type="match status" value="1"/>
</dbReference>
<evidence type="ECO:0000255" key="1">
    <source>
        <dbReference type="HAMAP-Rule" id="MF_01685"/>
    </source>
</evidence>
<accession>B2G9D0</accession>
<keyword id="KW-0274">FAD</keyword>
<keyword id="KW-0285">Flavoprotein</keyword>
<keyword id="KW-0521">NADP</keyword>
<keyword id="KW-0560">Oxidoreductase</keyword>
<comment type="catalytic activity">
    <reaction evidence="1">
        <text>2 reduced [2Fe-2S]-[ferredoxin] + NADP(+) + H(+) = 2 oxidized [2Fe-2S]-[ferredoxin] + NADPH</text>
        <dbReference type="Rhea" id="RHEA:20125"/>
        <dbReference type="Rhea" id="RHEA-COMP:10000"/>
        <dbReference type="Rhea" id="RHEA-COMP:10001"/>
        <dbReference type="ChEBI" id="CHEBI:15378"/>
        <dbReference type="ChEBI" id="CHEBI:33737"/>
        <dbReference type="ChEBI" id="CHEBI:33738"/>
        <dbReference type="ChEBI" id="CHEBI:57783"/>
        <dbReference type="ChEBI" id="CHEBI:58349"/>
        <dbReference type="EC" id="1.18.1.2"/>
    </reaction>
</comment>
<comment type="cofactor">
    <cofactor evidence="1">
        <name>FAD</name>
        <dbReference type="ChEBI" id="CHEBI:57692"/>
    </cofactor>
    <text evidence="1">Binds 1 FAD per subunit.</text>
</comment>
<comment type="subunit">
    <text evidence="1">Homodimer.</text>
</comment>
<comment type="similarity">
    <text evidence="1">Belongs to the ferredoxin--NADP reductase type 2 family.</text>
</comment>
<sequence>MAEKIYDVTIIGGGPAGMFASFYCGLHELDAQLIESLPQLGGQVGALYPEKQVWDVAGMPGVTGHDLIAKLEEQMAVAPIDQFLGETVEDVIKGDDGTFTIKSAKRVSRSRAVIIALGNGAFTPRKLALEGAAEIEGKQLSYFVNHKADYADKRVAILGGGDSAIDIALMLEPVAKEVHLVHRRDQFRGLEHTVTQLKQSSVQLDTPFLPRALTVEDDETVTLDLKKMRSDDEAQLNVDKIVVNYGFTSNNAALNQWSLDLAAEHNLIKVDSMMETSTEGVYAIGDGVTYPGKVALIAAGFGEAPTAVTALAKKLYPDKRMAMHSSSMGITK</sequence>